<name>THSB_SACSH</name>
<keyword id="KW-0067">ATP-binding</keyword>
<keyword id="KW-0143">Chaperone</keyword>
<keyword id="KW-0963">Cytoplasm</keyword>
<keyword id="KW-0903">Direct protein sequencing</keyword>
<keyword id="KW-0378">Hydrolase</keyword>
<keyword id="KW-0547">Nucleotide-binding</keyword>
<keyword id="KW-0346">Stress response</keyword>
<reference key="1">
    <citation type="journal article" date="1991" name="Nature">
        <title>A molecular chaperone from a thermophilic archaebacterium is related to the eukaryotic protein T-complex polypeptide-1.</title>
        <authorList>
            <person name="Trent J.D."/>
            <person name="Nimmesgern E."/>
            <person name="Wall J.S."/>
            <person name="Hartl F.U."/>
            <person name="Horwich A.L."/>
        </authorList>
    </citation>
    <scope>NUCLEOTIDE SEQUENCE [GENOMIC DNA]</scope>
    <scope>FUNCTION</scope>
    <scope>FUNCTION AS AN ATPASE</scope>
    <scope>CATALYTIC ACTIVITY</scope>
    <scope>BIOPHYSICOCHEMICAL PROPERTIES</scope>
    <scope>SUBUNIT</scope>
    <scope>SUBCELLULAR LOCATION</scope>
    <source>
        <strain>ATCC 51178 / DSM 5389 / JCM 8931 / NBRC 15437 / B12</strain>
    </source>
</reference>
<reference evidence="9" key="2">
    <citation type="journal article" date="2021" name="Environ. Microbiol.">
        <title>New insights into the diversity and evolution of the archaeal mobilome from three complete genomes of Saccharolobus shibatae.</title>
        <authorList>
            <person name="Medvedeva S."/>
            <person name="Brandt D."/>
            <person name="Cvirkaite-Krupovic V."/>
            <person name="Liu Y."/>
            <person name="Severinov K."/>
            <person name="Ishino S."/>
            <person name="Ishino Y."/>
            <person name="Prangishvili D."/>
            <person name="Kalinowski J."/>
            <person name="Krupovic M."/>
        </authorList>
    </citation>
    <scope>NUCLEOTIDE SEQUENCE [LARGE SCALE GENOMIC DNA]</scope>
    <source>
        <strain>ATCC 51178 / DSM 5389 / JCM 8931 / NBRC 15437 / B12</strain>
    </source>
</reference>
<reference key="3">
    <citation type="submission" date="1994-10" db="EMBL/GenBank/DDBJ databases">
        <authorList>
            <person name="Osipiuk J."/>
            <person name="Trent J.D."/>
        </authorList>
    </citation>
    <scope>NUCLEOTIDE SEQUENCE [GENOMIC DNA] OF 1-10</scope>
    <source>
        <strain>ATCC 51178 / DSM 5389 / JCM 8931 / NBRC 15437 / B12</strain>
    </source>
</reference>
<reference key="4">
    <citation type="journal article" date="1995" name="J. Mol. Biol.">
        <title>The 60 kDa heat shock proteins in the hyperthermophilic archaeon Sulfolobus shibatae.</title>
        <authorList>
            <person name="Kagawa H.K."/>
            <person name="Osipiuk J."/>
            <person name="Maltsev N."/>
            <person name="Overbeek R."/>
            <person name="Quaite-Randall E."/>
            <person name="Joachimiak A."/>
            <person name="Trent J.D."/>
        </authorList>
    </citation>
    <scope>PARTIAL PROTEIN SEQUENCE</scope>
    <scope>INDUCTION BY HEAT SHOCK</scope>
    <source>
        <strain>ATCC 51178 / DSM 5389 / JCM 8931 / NBRC 15437 / B12</strain>
    </source>
</reference>
<organism>
    <name type="scientific">Saccharolobus shibatae (strain ATCC 51178 / DSM 5389 / JCM 8931 / NBRC 15437 / B12)</name>
    <name type="common">Sulfolobus shibatae</name>
    <dbReference type="NCBI Taxonomy" id="523848"/>
    <lineage>
        <taxon>Archaea</taxon>
        <taxon>Thermoproteota</taxon>
        <taxon>Thermoprotei</taxon>
        <taxon>Sulfolobales</taxon>
        <taxon>Sulfolobaceae</taxon>
        <taxon>Saccharolobus</taxon>
    </lineage>
</organism>
<comment type="function">
    <text evidence="2 3">Molecular chaperone; binds unfolded polypeptides in vitro, stimulates protein folding and has ATPase activity (PubMed:1836250). One of the most abundant proteins in the cell at all temperatures (PubMed:7473746).</text>
</comment>
<comment type="catalytic activity">
    <reaction evidence="7">
        <text>ATP + H2O = ADP + phosphate + H(+)</text>
        <dbReference type="Rhea" id="RHEA:13065"/>
        <dbReference type="ChEBI" id="CHEBI:15377"/>
        <dbReference type="ChEBI" id="CHEBI:15378"/>
        <dbReference type="ChEBI" id="CHEBI:30616"/>
        <dbReference type="ChEBI" id="CHEBI:43474"/>
        <dbReference type="ChEBI" id="CHEBI:456216"/>
    </reaction>
</comment>
<comment type="biophysicochemical properties">
    <temperatureDependence>
        <text evidence="2">Optimum temperature is 75 degrees Celsius for ATPase activity of the isolated complex.</text>
    </temperatureDependence>
</comment>
<comment type="subunit">
    <text evidence="3 7 8">Forms a heterooligomeric complex of two stacked nine-membered rings; one of alpha and the other of beta subunits (Probable). Sometimes called a 'rosettasome' (PubMed:7473746).</text>
</comment>
<comment type="subcellular location">
    <subcellularLocation>
        <location evidence="7">Cytoplasm</location>
    </subcellularLocation>
</comment>
<comment type="induction">
    <text evidence="3">Transcription is induced by heat shock (shift from 75 to 86 degrees Celsius). At 80 degrees Celsius and above ThsA and ThsB are the major proteins synthesized (at protein level).</text>
</comment>
<comment type="similarity">
    <text evidence="7">Belongs to the TCP-1 chaperonin family.</text>
</comment>
<dbReference type="EC" id="3.6.4.-" evidence="7"/>
<dbReference type="EMBL" id="X63834">
    <property type="protein sequence ID" value="CAA45326.1"/>
    <property type="molecule type" value="Genomic_DNA"/>
</dbReference>
<dbReference type="EMBL" id="CP077717">
    <property type="protein sequence ID" value="QXJ30288.1"/>
    <property type="molecule type" value="Genomic_DNA"/>
</dbReference>
<dbReference type="EMBL" id="L36863">
    <property type="protein sequence ID" value="AAA72454.1"/>
    <property type="molecule type" value="Genomic_DNA"/>
</dbReference>
<dbReference type="PIR" id="S19647">
    <property type="entry name" value="S19647"/>
</dbReference>
<dbReference type="SMR" id="P28488"/>
<dbReference type="KEGG" id="sshi:J5U23_03186"/>
<dbReference type="OrthoDB" id="9362at2157"/>
<dbReference type="Proteomes" id="UP000694018">
    <property type="component" value="Chromosome"/>
</dbReference>
<dbReference type="GO" id="GO:0005737">
    <property type="term" value="C:cytoplasm"/>
    <property type="evidence" value="ECO:0007669"/>
    <property type="project" value="UniProtKB-SubCell"/>
</dbReference>
<dbReference type="GO" id="GO:0005524">
    <property type="term" value="F:ATP binding"/>
    <property type="evidence" value="ECO:0007669"/>
    <property type="project" value="UniProtKB-KW"/>
</dbReference>
<dbReference type="GO" id="GO:0016887">
    <property type="term" value="F:ATP hydrolysis activity"/>
    <property type="evidence" value="ECO:0007669"/>
    <property type="project" value="InterPro"/>
</dbReference>
<dbReference type="GO" id="GO:0140662">
    <property type="term" value="F:ATP-dependent protein folding chaperone"/>
    <property type="evidence" value="ECO:0007669"/>
    <property type="project" value="InterPro"/>
</dbReference>
<dbReference type="GO" id="GO:0051082">
    <property type="term" value="F:unfolded protein binding"/>
    <property type="evidence" value="ECO:0007669"/>
    <property type="project" value="InterPro"/>
</dbReference>
<dbReference type="CDD" id="cd03343">
    <property type="entry name" value="cpn60"/>
    <property type="match status" value="1"/>
</dbReference>
<dbReference type="FunFam" id="3.50.7.10:FF:000014">
    <property type="entry name" value="Thermosome subunit"/>
    <property type="match status" value="1"/>
</dbReference>
<dbReference type="InterPro" id="IPR017998">
    <property type="entry name" value="Chaperone_TCP-1"/>
</dbReference>
<dbReference type="InterPro" id="IPR002194">
    <property type="entry name" value="Chaperonin_TCP-1_CS"/>
</dbReference>
<dbReference type="InterPro" id="IPR002423">
    <property type="entry name" value="Cpn60/GroEL/TCP-1"/>
</dbReference>
<dbReference type="InterPro" id="IPR053374">
    <property type="entry name" value="TCP-1_chaperonin"/>
</dbReference>
<dbReference type="InterPro" id="IPR054827">
    <property type="entry name" value="thermosome_alpha"/>
</dbReference>
<dbReference type="InterPro" id="IPR012714">
    <property type="entry name" value="Thermosome_arc"/>
</dbReference>
<dbReference type="NCBIfam" id="NF041082">
    <property type="entry name" value="thermosome_alpha"/>
    <property type="match status" value="1"/>
</dbReference>
<dbReference type="NCBIfam" id="TIGR02339">
    <property type="entry name" value="thermosome_arch"/>
    <property type="match status" value="1"/>
</dbReference>
<dbReference type="NCBIfam" id="NF041083">
    <property type="entry name" value="thermosome_beta"/>
    <property type="match status" value="1"/>
</dbReference>
<dbReference type="PANTHER" id="PTHR11353">
    <property type="entry name" value="CHAPERONIN"/>
    <property type="match status" value="1"/>
</dbReference>
<dbReference type="Pfam" id="PF00118">
    <property type="entry name" value="Cpn60_TCP1"/>
    <property type="match status" value="1"/>
</dbReference>
<dbReference type="PROSITE" id="PS00750">
    <property type="entry name" value="TCP1_1"/>
    <property type="match status" value="1"/>
</dbReference>
<dbReference type="PROSITE" id="PS00751">
    <property type="entry name" value="TCP1_2"/>
    <property type="match status" value="1"/>
</dbReference>
<dbReference type="PROSITE" id="PS00995">
    <property type="entry name" value="TCP1_3"/>
    <property type="match status" value="1"/>
</dbReference>
<sequence length="552" mass="59649">MATATVATTPEGIPVIILKEGSSRTYGKEALRANIAAVKAIEEALKSTYGPRGMDKMLVDSLGDITITNDGATILDKMDLQHPTGKLLVQIAKGQDEETADGTKTAVILAGELAKKAEDLLYKEIHPTIIVSGYKKAEEIALKTIQDIAQPVSINDTDVLRKVALTSLGSKAVAGAREYLADLVVKAVAQVAELRGDKWYVDLDNVQIVKKHGGSINDTQLVYGIVVDKEVVHPGMPKRIENAKIALLDASLEVEKPELDAEIRINDPTQMHKFLEEEENILKEKVDKIAATGANVVICQKGIDEVAQHYLAKKGILAVRRAKKSDLEKLARATGGRVISNIDELTSQDLGYAALVEERKVGEDKMVFVEGAKNPKSVSILIRGGLERVVDETERALRDALGTVADVIRDGRAVAGGGAVEIEIAKRLRKYAPQVGGKEQLAIEAYANAIEGLIMILAENAGLDPIDKLMQLRSLHENETNKWYGLNLFTGNPEDMWKLGVIEPALVKMNAIKAATEAVTLVLRIDDIVAAGKKGGSEPGGKKEKEEKSSED</sequence>
<proteinExistence type="evidence at protein level"/>
<accession>P28488</accession>
<accession>A0A8F5BRT8</accession>
<protein>
    <recommendedName>
        <fullName>Thermosome subunit beta</fullName>
        <ecNumber evidence="7">3.6.4.-</ecNumber>
    </recommendedName>
    <alternativeName>
        <fullName>Chaperonin subunit beta</fullName>
    </alternativeName>
    <alternativeName>
        <fullName>Ring complex subunit beta</fullName>
    </alternativeName>
    <alternativeName>
        <fullName>Thermophilic factor 55 beta</fullName>
        <shortName evidence="5">TF55-beta</shortName>
    </alternativeName>
    <alternativeName>
        <fullName>Thermosome subunit 2</fullName>
    </alternativeName>
</protein>
<evidence type="ECO:0000256" key="1">
    <source>
        <dbReference type="SAM" id="MobiDB-lite"/>
    </source>
</evidence>
<evidence type="ECO:0000269" key="2">
    <source>
    </source>
</evidence>
<evidence type="ECO:0000269" key="3">
    <source>
    </source>
</evidence>
<evidence type="ECO:0000303" key="4">
    <source>
    </source>
</evidence>
<evidence type="ECO:0000303" key="5">
    <source>
    </source>
</evidence>
<evidence type="ECO:0000305" key="6"/>
<evidence type="ECO:0000305" key="7">
    <source>
    </source>
</evidence>
<evidence type="ECO:0000305" key="8">
    <source>
    </source>
</evidence>
<evidence type="ECO:0000312" key="9">
    <source>
        <dbReference type="EMBL" id="QXJ30288.1"/>
    </source>
</evidence>
<feature type="chain" id="PRO_0000128405" description="Thermosome subunit beta">
    <location>
        <begin position="1"/>
        <end position="552"/>
    </location>
</feature>
<feature type="region of interest" description="Disordered" evidence="1">
    <location>
        <begin position="531"/>
        <end position="552"/>
    </location>
</feature>
<feature type="compositionally biased region" description="Basic and acidic residues" evidence="1">
    <location>
        <begin position="540"/>
        <end position="552"/>
    </location>
</feature>
<feature type="sequence conflict" description="In Ref. 1; QXJ30288." evidence="6" ref="1">
    <original>L</original>
    <variation>F</variation>
    <location>
        <position position="58"/>
    </location>
</feature>
<gene>
    <name type="primary">thsB</name>
    <name evidence="4" type="synonym">tf55</name>
    <name evidence="9" type="ORF">J5U23_03186</name>
</gene>